<evidence type="ECO:0000255" key="1">
    <source>
        <dbReference type="HAMAP-Rule" id="MF_01454"/>
    </source>
</evidence>
<evidence type="ECO:0000255" key="2">
    <source>
        <dbReference type="PROSITE-ProRule" id="PRU01229"/>
    </source>
</evidence>
<evidence type="ECO:0000255" key="3">
    <source>
        <dbReference type="PROSITE-ProRule" id="PRU01231"/>
    </source>
</evidence>
<name>OBG_SHOC1</name>
<keyword id="KW-0963">Cytoplasm</keyword>
<keyword id="KW-0342">GTP-binding</keyword>
<keyword id="KW-0378">Hydrolase</keyword>
<keyword id="KW-0460">Magnesium</keyword>
<keyword id="KW-0479">Metal-binding</keyword>
<keyword id="KW-0547">Nucleotide-binding</keyword>
<keyword id="KW-1185">Reference proteome</keyword>
<sequence>MFVDKVKVYAKGGDGGNGMVAYRREKYVPDGGPAGGDGGRGASVILEVDEGLRTLMDFRYNKHFKGKRGEHGMSKNMHGKKAEDLVVKVPPGTMVTDEETGALLADLTTHGQRAVVAKGGRGGRGNVRFVTPANPAPDHAENGEPGEERNLLLELKVLADVGLVGFPSVGKSTLLSIVSAAKPKIAEYHFTTITPNLGVVDTQDGRSFVMADLPGLIEGAHEGVGLGHQFLRHIERTRVIVHIVDMSAMEGRDPVEDYHKINEELSQYNYRLTERPQLVVANKMDMPEANENLKRFKEALGEETKIFPVSAITKDGVRELMLAIADELEHAPEFPLHDSEEQVEGRVLYKHELPIEPFTITRGDDGVFELSGAELERAFKMTDFAREESVRRFARRMRKMGVDEALRKRGAKDGDLVRIMKFEFEFVE</sequence>
<gene>
    <name evidence="1" type="primary">obg</name>
    <name type="ordered locus">ABC1542</name>
</gene>
<reference key="1">
    <citation type="submission" date="2003-10" db="EMBL/GenBank/DDBJ databases">
        <title>The complete genome sequence of the alkaliphilic Bacillus clausii KSM-K16.</title>
        <authorList>
            <person name="Takaki Y."/>
            <person name="Kageyama Y."/>
            <person name="Shimamura S."/>
            <person name="Suzuki H."/>
            <person name="Nishi S."/>
            <person name="Hatada Y."/>
            <person name="Kawai S."/>
            <person name="Ito S."/>
            <person name="Horikoshi K."/>
        </authorList>
    </citation>
    <scope>NUCLEOTIDE SEQUENCE [LARGE SCALE GENOMIC DNA]</scope>
    <source>
        <strain>KSM-K16</strain>
    </source>
</reference>
<organism>
    <name type="scientific">Shouchella clausii (strain KSM-K16)</name>
    <name type="common">Alkalihalobacillus clausii</name>
    <dbReference type="NCBI Taxonomy" id="66692"/>
    <lineage>
        <taxon>Bacteria</taxon>
        <taxon>Bacillati</taxon>
        <taxon>Bacillota</taxon>
        <taxon>Bacilli</taxon>
        <taxon>Bacillales</taxon>
        <taxon>Bacillaceae</taxon>
        <taxon>Shouchella</taxon>
    </lineage>
</organism>
<protein>
    <recommendedName>
        <fullName evidence="1">GTPase Obg</fullName>
        <ecNumber evidence="1">3.6.5.-</ecNumber>
    </recommendedName>
    <alternativeName>
        <fullName evidence="1">GTP-binding protein Obg</fullName>
    </alternativeName>
</protein>
<feature type="chain" id="PRO_0000385724" description="GTPase Obg">
    <location>
        <begin position="1"/>
        <end position="428"/>
    </location>
</feature>
<feature type="domain" description="Obg" evidence="3">
    <location>
        <begin position="1"/>
        <end position="158"/>
    </location>
</feature>
<feature type="domain" description="OBG-type G" evidence="1">
    <location>
        <begin position="159"/>
        <end position="329"/>
    </location>
</feature>
<feature type="domain" description="OCT" evidence="2">
    <location>
        <begin position="350"/>
        <end position="428"/>
    </location>
</feature>
<feature type="binding site" evidence="1">
    <location>
        <begin position="165"/>
        <end position="172"/>
    </location>
    <ligand>
        <name>GTP</name>
        <dbReference type="ChEBI" id="CHEBI:37565"/>
    </ligand>
</feature>
<feature type="binding site" evidence="1">
    <location>
        <position position="172"/>
    </location>
    <ligand>
        <name>Mg(2+)</name>
        <dbReference type="ChEBI" id="CHEBI:18420"/>
    </ligand>
</feature>
<feature type="binding site" evidence="1">
    <location>
        <begin position="190"/>
        <end position="194"/>
    </location>
    <ligand>
        <name>GTP</name>
        <dbReference type="ChEBI" id="CHEBI:37565"/>
    </ligand>
</feature>
<feature type="binding site" evidence="1">
    <location>
        <position position="192"/>
    </location>
    <ligand>
        <name>Mg(2+)</name>
        <dbReference type="ChEBI" id="CHEBI:18420"/>
    </ligand>
</feature>
<feature type="binding site" evidence="1">
    <location>
        <begin position="212"/>
        <end position="215"/>
    </location>
    <ligand>
        <name>GTP</name>
        <dbReference type="ChEBI" id="CHEBI:37565"/>
    </ligand>
</feature>
<feature type="binding site" evidence="1">
    <location>
        <begin position="282"/>
        <end position="285"/>
    </location>
    <ligand>
        <name>GTP</name>
        <dbReference type="ChEBI" id="CHEBI:37565"/>
    </ligand>
</feature>
<feature type="binding site" evidence="1">
    <location>
        <begin position="310"/>
        <end position="312"/>
    </location>
    <ligand>
        <name>GTP</name>
        <dbReference type="ChEBI" id="CHEBI:37565"/>
    </ligand>
</feature>
<proteinExistence type="inferred from homology"/>
<accession>Q5WHS8</accession>
<comment type="function">
    <text evidence="1">An essential GTPase which binds GTP, GDP and possibly (p)ppGpp with moderate affinity, with high nucleotide exchange rates and a fairly low GTP hydrolysis rate. Plays a role in control of the cell cycle, stress response, ribosome biogenesis and in those bacteria that undergo differentiation, in morphogenesis control.</text>
</comment>
<comment type="cofactor">
    <cofactor evidence="1">
        <name>Mg(2+)</name>
        <dbReference type="ChEBI" id="CHEBI:18420"/>
    </cofactor>
</comment>
<comment type="subunit">
    <text evidence="1">Monomer.</text>
</comment>
<comment type="subcellular location">
    <subcellularLocation>
        <location evidence="1">Cytoplasm</location>
    </subcellularLocation>
</comment>
<comment type="similarity">
    <text evidence="1">Belongs to the TRAFAC class OBG-HflX-like GTPase superfamily. OBG GTPase family.</text>
</comment>
<dbReference type="EC" id="3.6.5.-" evidence="1"/>
<dbReference type="EMBL" id="AP006627">
    <property type="protein sequence ID" value="BAD64077.1"/>
    <property type="molecule type" value="Genomic_DNA"/>
</dbReference>
<dbReference type="RefSeq" id="WP_011246386.1">
    <property type="nucleotide sequence ID" value="NC_006582.1"/>
</dbReference>
<dbReference type="SMR" id="Q5WHS8"/>
<dbReference type="STRING" id="66692.ABC1542"/>
<dbReference type="KEGG" id="bcl:ABC1542"/>
<dbReference type="eggNOG" id="COG0536">
    <property type="taxonomic scope" value="Bacteria"/>
</dbReference>
<dbReference type="HOGENOM" id="CLU_011747_2_0_9"/>
<dbReference type="OrthoDB" id="9807318at2"/>
<dbReference type="Proteomes" id="UP000001168">
    <property type="component" value="Chromosome"/>
</dbReference>
<dbReference type="GO" id="GO:0005737">
    <property type="term" value="C:cytoplasm"/>
    <property type="evidence" value="ECO:0007669"/>
    <property type="project" value="UniProtKB-SubCell"/>
</dbReference>
<dbReference type="GO" id="GO:0005525">
    <property type="term" value="F:GTP binding"/>
    <property type="evidence" value="ECO:0007669"/>
    <property type="project" value="UniProtKB-UniRule"/>
</dbReference>
<dbReference type="GO" id="GO:0003924">
    <property type="term" value="F:GTPase activity"/>
    <property type="evidence" value="ECO:0007669"/>
    <property type="project" value="UniProtKB-UniRule"/>
</dbReference>
<dbReference type="GO" id="GO:0000287">
    <property type="term" value="F:magnesium ion binding"/>
    <property type="evidence" value="ECO:0007669"/>
    <property type="project" value="InterPro"/>
</dbReference>
<dbReference type="GO" id="GO:0042254">
    <property type="term" value="P:ribosome biogenesis"/>
    <property type="evidence" value="ECO:0007669"/>
    <property type="project" value="UniProtKB-UniRule"/>
</dbReference>
<dbReference type="CDD" id="cd01898">
    <property type="entry name" value="Obg"/>
    <property type="match status" value="1"/>
</dbReference>
<dbReference type="FunFam" id="2.70.210.12:FF:000001">
    <property type="entry name" value="GTPase Obg"/>
    <property type="match status" value="1"/>
</dbReference>
<dbReference type="FunFam" id="3.40.50.300:FF:000515">
    <property type="entry name" value="GTPase Obg"/>
    <property type="match status" value="1"/>
</dbReference>
<dbReference type="Gene3D" id="3.30.300.350">
    <property type="entry name" value="GTP-binding protein OBG, C-terminal domain"/>
    <property type="match status" value="1"/>
</dbReference>
<dbReference type="Gene3D" id="2.70.210.12">
    <property type="entry name" value="GTP1/OBG domain"/>
    <property type="match status" value="1"/>
</dbReference>
<dbReference type="Gene3D" id="3.40.50.300">
    <property type="entry name" value="P-loop containing nucleotide triphosphate hydrolases"/>
    <property type="match status" value="1"/>
</dbReference>
<dbReference type="HAMAP" id="MF_01454">
    <property type="entry name" value="GTPase_Obg"/>
    <property type="match status" value="1"/>
</dbReference>
<dbReference type="InterPro" id="IPR031167">
    <property type="entry name" value="G_OBG"/>
</dbReference>
<dbReference type="InterPro" id="IPR006073">
    <property type="entry name" value="GTP-bd"/>
</dbReference>
<dbReference type="InterPro" id="IPR014100">
    <property type="entry name" value="GTP-bd_Obg/CgtA"/>
</dbReference>
<dbReference type="InterPro" id="IPR036346">
    <property type="entry name" value="GTP-bd_prot_GTP1/OBG_C_sf"/>
</dbReference>
<dbReference type="InterPro" id="IPR006074">
    <property type="entry name" value="GTP1-OBG_CS"/>
</dbReference>
<dbReference type="InterPro" id="IPR006169">
    <property type="entry name" value="GTP1_OBG_dom"/>
</dbReference>
<dbReference type="InterPro" id="IPR036726">
    <property type="entry name" value="GTP1_OBG_dom_sf"/>
</dbReference>
<dbReference type="InterPro" id="IPR045086">
    <property type="entry name" value="OBG_GTPase"/>
</dbReference>
<dbReference type="InterPro" id="IPR015349">
    <property type="entry name" value="OCT_dom"/>
</dbReference>
<dbReference type="InterPro" id="IPR027417">
    <property type="entry name" value="P-loop_NTPase"/>
</dbReference>
<dbReference type="InterPro" id="IPR005225">
    <property type="entry name" value="Small_GTP-bd"/>
</dbReference>
<dbReference type="NCBIfam" id="TIGR02729">
    <property type="entry name" value="Obg_CgtA"/>
    <property type="match status" value="1"/>
</dbReference>
<dbReference type="NCBIfam" id="TIGR03595">
    <property type="entry name" value="Obg_CgtA_exten"/>
    <property type="match status" value="1"/>
</dbReference>
<dbReference type="NCBIfam" id="NF008954">
    <property type="entry name" value="PRK12296.1"/>
    <property type="match status" value="1"/>
</dbReference>
<dbReference type="NCBIfam" id="NF008955">
    <property type="entry name" value="PRK12297.1"/>
    <property type="match status" value="1"/>
</dbReference>
<dbReference type="NCBIfam" id="NF008956">
    <property type="entry name" value="PRK12299.1"/>
    <property type="match status" value="1"/>
</dbReference>
<dbReference type="NCBIfam" id="TIGR00231">
    <property type="entry name" value="small_GTP"/>
    <property type="match status" value="1"/>
</dbReference>
<dbReference type="PANTHER" id="PTHR11702">
    <property type="entry name" value="DEVELOPMENTALLY REGULATED GTP-BINDING PROTEIN-RELATED"/>
    <property type="match status" value="1"/>
</dbReference>
<dbReference type="PANTHER" id="PTHR11702:SF31">
    <property type="entry name" value="MITOCHONDRIAL RIBOSOME-ASSOCIATED GTPASE 2"/>
    <property type="match status" value="1"/>
</dbReference>
<dbReference type="Pfam" id="PF09269">
    <property type="entry name" value="DUF1967"/>
    <property type="match status" value="1"/>
</dbReference>
<dbReference type="Pfam" id="PF01018">
    <property type="entry name" value="GTP1_OBG"/>
    <property type="match status" value="1"/>
</dbReference>
<dbReference type="Pfam" id="PF01926">
    <property type="entry name" value="MMR_HSR1"/>
    <property type="match status" value="1"/>
</dbReference>
<dbReference type="PRINTS" id="PR00326">
    <property type="entry name" value="GTP1OBG"/>
</dbReference>
<dbReference type="SUPFAM" id="SSF102741">
    <property type="entry name" value="Obg GTP-binding protein C-terminal domain"/>
    <property type="match status" value="1"/>
</dbReference>
<dbReference type="SUPFAM" id="SSF82051">
    <property type="entry name" value="Obg GTP-binding protein N-terminal domain"/>
    <property type="match status" value="1"/>
</dbReference>
<dbReference type="SUPFAM" id="SSF52540">
    <property type="entry name" value="P-loop containing nucleoside triphosphate hydrolases"/>
    <property type="match status" value="1"/>
</dbReference>
<dbReference type="PROSITE" id="PS51710">
    <property type="entry name" value="G_OBG"/>
    <property type="match status" value="1"/>
</dbReference>
<dbReference type="PROSITE" id="PS00905">
    <property type="entry name" value="GTP1_OBG"/>
    <property type="match status" value="1"/>
</dbReference>
<dbReference type="PROSITE" id="PS51883">
    <property type="entry name" value="OBG"/>
    <property type="match status" value="1"/>
</dbReference>
<dbReference type="PROSITE" id="PS51881">
    <property type="entry name" value="OCT"/>
    <property type="match status" value="1"/>
</dbReference>